<dbReference type="EC" id="2.1.1.228" evidence="1"/>
<dbReference type="EMBL" id="CP001052">
    <property type="protein sequence ID" value="ACD17369.1"/>
    <property type="molecule type" value="Genomic_DNA"/>
</dbReference>
<dbReference type="RefSeq" id="WP_012433949.1">
    <property type="nucleotide sequence ID" value="NC_010681.1"/>
</dbReference>
<dbReference type="SMR" id="B2T605"/>
<dbReference type="STRING" id="398527.Bphyt_2975"/>
<dbReference type="KEGG" id="bpy:Bphyt_2975"/>
<dbReference type="eggNOG" id="COG0336">
    <property type="taxonomic scope" value="Bacteria"/>
</dbReference>
<dbReference type="HOGENOM" id="CLU_047363_0_2_4"/>
<dbReference type="OrthoDB" id="9807416at2"/>
<dbReference type="Proteomes" id="UP000001739">
    <property type="component" value="Chromosome 1"/>
</dbReference>
<dbReference type="GO" id="GO:0005829">
    <property type="term" value="C:cytosol"/>
    <property type="evidence" value="ECO:0007669"/>
    <property type="project" value="TreeGrafter"/>
</dbReference>
<dbReference type="GO" id="GO:0052906">
    <property type="term" value="F:tRNA (guanine(37)-N1)-methyltransferase activity"/>
    <property type="evidence" value="ECO:0007669"/>
    <property type="project" value="UniProtKB-UniRule"/>
</dbReference>
<dbReference type="GO" id="GO:0002939">
    <property type="term" value="P:tRNA N1-guanine methylation"/>
    <property type="evidence" value="ECO:0007669"/>
    <property type="project" value="TreeGrafter"/>
</dbReference>
<dbReference type="CDD" id="cd18080">
    <property type="entry name" value="TrmD-like"/>
    <property type="match status" value="1"/>
</dbReference>
<dbReference type="FunFam" id="1.10.1270.20:FF:000001">
    <property type="entry name" value="tRNA (guanine-N(1)-)-methyltransferase"/>
    <property type="match status" value="1"/>
</dbReference>
<dbReference type="FunFam" id="3.40.1280.10:FF:000001">
    <property type="entry name" value="tRNA (guanine-N(1)-)-methyltransferase"/>
    <property type="match status" value="1"/>
</dbReference>
<dbReference type="Gene3D" id="3.40.1280.10">
    <property type="match status" value="1"/>
</dbReference>
<dbReference type="Gene3D" id="1.10.1270.20">
    <property type="entry name" value="tRNA(m1g37)methyltransferase, domain 2"/>
    <property type="match status" value="1"/>
</dbReference>
<dbReference type="HAMAP" id="MF_00605">
    <property type="entry name" value="TrmD"/>
    <property type="match status" value="1"/>
</dbReference>
<dbReference type="InterPro" id="IPR029028">
    <property type="entry name" value="Alpha/beta_knot_MTases"/>
</dbReference>
<dbReference type="InterPro" id="IPR023148">
    <property type="entry name" value="tRNA_m1G_MeTrfase_C_sf"/>
</dbReference>
<dbReference type="InterPro" id="IPR002649">
    <property type="entry name" value="tRNA_m1G_MeTrfase_TrmD"/>
</dbReference>
<dbReference type="InterPro" id="IPR029026">
    <property type="entry name" value="tRNA_m1G_MTases_N"/>
</dbReference>
<dbReference type="InterPro" id="IPR016009">
    <property type="entry name" value="tRNA_MeTrfase_TRMD/TRM10"/>
</dbReference>
<dbReference type="NCBIfam" id="NF000648">
    <property type="entry name" value="PRK00026.1"/>
    <property type="match status" value="1"/>
</dbReference>
<dbReference type="NCBIfam" id="TIGR00088">
    <property type="entry name" value="trmD"/>
    <property type="match status" value="1"/>
</dbReference>
<dbReference type="PANTHER" id="PTHR46417">
    <property type="entry name" value="TRNA (GUANINE-N(1)-)-METHYLTRANSFERASE"/>
    <property type="match status" value="1"/>
</dbReference>
<dbReference type="PANTHER" id="PTHR46417:SF1">
    <property type="entry name" value="TRNA (GUANINE-N(1)-)-METHYLTRANSFERASE"/>
    <property type="match status" value="1"/>
</dbReference>
<dbReference type="Pfam" id="PF01746">
    <property type="entry name" value="tRNA_m1G_MT"/>
    <property type="match status" value="1"/>
</dbReference>
<dbReference type="PIRSF" id="PIRSF000386">
    <property type="entry name" value="tRNA_mtase"/>
    <property type="match status" value="1"/>
</dbReference>
<dbReference type="SUPFAM" id="SSF75217">
    <property type="entry name" value="alpha/beta knot"/>
    <property type="match status" value="1"/>
</dbReference>
<gene>
    <name evidence="1" type="primary">trmD</name>
    <name type="ordered locus">Bphyt_2975</name>
</gene>
<name>TRMD_PARPJ</name>
<proteinExistence type="inferred from homology"/>
<comment type="function">
    <text evidence="1">Specifically methylates guanosine-37 in various tRNAs.</text>
</comment>
<comment type="catalytic activity">
    <reaction evidence="1">
        <text>guanosine(37) in tRNA + S-adenosyl-L-methionine = N(1)-methylguanosine(37) in tRNA + S-adenosyl-L-homocysteine + H(+)</text>
        <dbReference type="Rhea" id="RHEA:36899"/>
        <dbReference type="Rhea" id="RHEA-COMP:10145"/>
        <dbReference type="Rhea" id="RHEA-COMP:10147"/>
        <dbReference type="ChEBI" id="CHEBI:15378"/>
        <dbReference type="ChEBI" id="CHEBI:57856"/>
        <dbReference type="ChEBI" id="CHEBI:59789"/>
        <dbReference type="ChEBI" id="CHEBI:73542"/>
        <dbReference type="ChEBI" id="CHEBI:74269"/>
        <dbReference type="EC" id="2.1.1.228"/>
    </reaction>
</comment>
<comment type="subunit">
    <text evidence="1">Homodimer.</text>
</comment>
<comment type="subcellular location">
    <subcellularLocation>
        <location evidence="1">Cytoplasm</location>
    </subcellularLocation>
</comment>
<comment type="similarity">
    <text evidence="1">Belongs to the RNA methyltransferase TrmD family.</text>
</comment>
<reference key="1">
    <citation type="journal article" date="2011" name="J. Bacteriol.">
        <title>Complete genome sequence of the plant growth-promoting endophyte Burkholderia phytofirmans strain PsJN.</title>
        <authorList>
            <person name="Weilharter A."/>
            <person name="Mitter B."/>
            <person name="Shin M.V."/>
            <person name="Chain P.S."/>
            <person name="Nowak J."/>
            <person name="Sessitsch A."/>
        </authorList>
    </citation>
    <scope>NUCLEOTIDE SEQUENCE [LARGE SCALE GENOMIC DNA]</scope>
    <source>
        <strain>DSM 17436 / LMG 22146 / PsJN</strain>
    </source>
</reference>
<organism>
    <name type="scientific">Paraburkholderia phytofirmans (strain DSM 17436 / LMG 22146 / PsJN)</name>
    <name type="common">Burkholderia phytofirmans</name>
    <dbReference type="NCBI Taxonomy" id="398527"/>
    <lineage>
        <taxon>Bacteria</taxon>
        <taxon>Pseudomonadati</taxon>
        <taxon>Pseudomonadota</taxon>
        <taxon>Betaproteobacteria</taxon>
        <taxon>Burkholderiales</taxon>
        <taxon>Burkholderiaceae</taxon>
        <taxon>Paraburkholderia</taxon>
    </lineage>
</organism>
<evidence type="ECO:0000255" key="1">
    <source>
        <dbReference type="HAMAP-Rule" id="MF_00605"/>
    </source>
</evidence>
<keyword id="KW-0963">Cytoplasm</keyword>
<keyword id="KW-0489">Methyltransferase</keyword>
<keyword id="KW-0949">S-adenosyl-L-methionine</keyword>
<keyword id="KW-0808">Transferase</keyword>
<keyword id="KW-0819">tRNA processing</keyword>
<feature type="chain" id="PRO_1000130146" description="tRNA (guanine-N(1)-)-methyltransferase">
    <location>
        <begin position="1"/>
        <end position="255"/>
    </location>
</feature>
<feature type="binding site" evidence="1">
    <location>
        <position position="117"/>
    </location>
    <ligand>
        <name>S-adenosyl-L-methionine</name>
        <dbReference type="ChEBI" id="CHEBI:59789"/>
    </ligand>
</feature>
<feature type="binding site" evidence="1">
    <location>
        <begin position="137"/>
        <end position="142"/>
    </location>
    <ligand>
        <name>S-adenosyl-L-methionine</name>
        <dbReference type="ChEBI" id="CHEBI:59789"/>
    </ligand>
</feature>
<protein>
    <recommendedName>
        <fullName evidence="1">tRNA (guanine-N(1)-)-methyltransferase</fullName>
        <ecNumber evidence="1">2.1.1.228</ecNumber>
    </recommendedName>
    <alternativeName>
        <fullName evidence="1">M1G-methyltransferase</fullName>
    </alternativeName>
    <alternativeName>
        <fullName evidence="1">tRNA [GM37] methyltransferase</fullName>
    </alternativeName>
</protein>
<sequence>MQFDVVTLFPDMFRALTDWGITSRAAKQERYALRTWNPRDFTTDNYRTIDDRPYGGGPGMVMLAKPLEDAIGAAKAAQAEQGIGASRVVMMSPQGATLNHDRVMQFAAEPGLILLCGRYEAIDQRLLDRVVDEEVSLGDFVLSGGELPAMALMDAVVRQLPGVLNDSQSAVQDSFVDVLLDCPHYTRPEEYDGVRVPDVLLGGHHAEIEAWRRREALRNTLKKRPDLIVKARRNKMLSRADEAWLASLAKEESKA</sequence>
<accession>B2T605</accession>